<organism>
    <name type="scientific">Rhinophylla pumilio</name>
    <name type="common">Dwarf little fruit bat</name>
    <dbReference type="NCBI Taxonomy" id="138707"/>
    <lineage>
        <taxon>Eukaryota</taxon>
        <taxon>Metazoa</taxon>
        <taxon>Chordata</taxon>
        <taxon>Craniata</taxon>
        <taxon>Vertebrata</taxon>
        <taxon>Euteleostomi</taxon>
        <taxon>Mammalia</taxon>
        <taxon>Eutheria</taxon>
        <taxon>Laurasiatheria</taxon>
        <taxon>Chiroptera</taxon>
        <taxon>Yangochiroptera</taxon>
        <taxon>Phyllostomidae</taxon>
        <taxon>Carolliinae</taxon>
        <taxon>Rhinophylla</taxon>
    </lineage>
</organism>
<feature type="chain" id="PRO_0000275118" description="NADH-ubiquinone oxidoreductase chain 4L">
    <location>
        <begin position="1"/>
        <end position="98"/>
    </location>
</feature>
<feature type="transmembrane region" description="Helical" evidence="3">
    <location>
        <begin position="1"/>
        <end position="21"/>
    </location>
</feature>
<feature type="transmembrane region" description="Helical" evidence="3">
    <location>
        <begin position="29"/>
        <end position="49"/>
    </location>
</feature>
<feature type="transmembrane region" description="Helical" evidence="3">
    <location>
        <begin position="61"/>
        <end position="81"/>
    </location>
</feature>
<reference key="1">
    <citation type="journal article" date="2006" name="Mol. Phylogenet. Evol.">
        <title>Molecular systematics of Vampyressine bats (Phyllostomidae: Stenodermatinae) with comparison of direct and indirect surveys of mitochondrial DNA variation.</title>
        <authorList>
            <person name="Hoofer S.R."/>
            <person name="Baker R.J."/>
        </authorList>
    </citation>
    <scope>NUCLEOTIDE SEQUENCE [GENOMIC DNA]</scope>
</reference>
<accession>Q1HV56</accession>
<keyword id="KW-0249">Electron transport</keyword>
<keyword id="KW-0472">Membrane</keyword>
<keyword id="KW-0496">Mitochondrion</keyword>
<keyword id="KW-0999">Mitochondrion inner membrane</keyword>
<keyword id="KW-0520">NAD</keyword>
<keyword id="KW-0679">Respiratory chain</keyword>
<keyword id="KW-1278">Translocase</keyword>
<keyword id="KW-0812">Transmembrane</keyword>
<keyword id="KW-1133">Transmembrane helix</keyword>
<keyword id="KW-0813">Transport</keyword>
<keyword id="KW-0830">Ubiquinone</keyword>
<evidence type="ECO:0000250" key="1">
    <source>
        <dbReference type="UniProtKB" id="P03901"/>
    </source>
</evidence>
<evidence type="ECO:0000250" key="2">
    <source>
        <dbReference type="UniProtKB" id="P03902"/>
    </source>
</evidence>
<evidence type="ECO:0000255" key="3"/>
<evidence type="ECO:0000305" key="4"/>
<protein>
    <recommendedName>
        <fullName>NADH-ubiquinone oxidoreductase chain 4L</fullName>
        <ecNumber>7.1.1.2</ecNumber>
    </recommendedName>
    <alternativeName>
        <fullName>NADH dehydrogenase subunit 4L</fullName>
    </alternativeName>
</protein>
<proteinExistence type="inferred from homology"/>
<comment type="function">
    <text evidence="1">Core subunit of the mitochondrial membrane respiratory chain NADH dehydrogenase (Complex I) which catalyzes electron transfer from NADH through the respiratory chain, using ubiquinone as an electron acceptor. Part of the enzyme membrane arm which is embedded in the lipid bilayer and involved in proton translocation.</text>
</comment>
<comment type="catalytic activity">
    <reaction evidence="1">
        <text>a ubiquinone + NADH + 5 H(+)(in) = a ubiquinol + NAD(+) + 4 H(+)(out)</text>
        <dbReference type="Rhea" id="RHEA:29091"/>
        <dbReference type="Rhea" id="RHEA-COMP:9565"/>
        <dbReference type="Rhea" id="RHEA-COMP:9566"/>
        <dbReference type="ChEBI" id="CHEBI:15378"/>
        <dbReference type="ChEBI" id="CHEBI:16389"/>
        <dbReference type="ChEBI" id="CHEBI:17976"/>
        <dbReference type="ChEBI" id="CHEBI:57540"/>
        <dbReference type="ChEBI" id="CHEBI:57945"/>
        <dbReference type="EC" id="7.1.1.2"/>
    </reaction>
    <physiologicalReaction direction="left-to-right" evidence="1">
        <dbReference type="Rhea" id="RHEA:29092"/>
    </physiologicalReaction>
</comment>
<comment type="subunit">
    <text evidence="2">Core subunit of respiratory chain NADH dehydrogenase (Complex I) which is composed of 45 different subunits.</text>
</comment>
<comment type="subcellular location">
    <subcellularLocation>
        <location evidence="2">Mitochondrion inner membrane</location>
        <topology evidence="3">Multi-pass membrane protein</topology>
    </subcellularLocation>
</comment>
<comment type="similarity">
    <text evidence="4">Belongs to the complex I subunit 4L family.</text>
</comment>
<geneLocation type="mitochondrion"/>
<dbReference type="EC" id="7.1.1.2"/>
<dbReference type="EMBL" id="DQ312363">
    <property type="protein sequence ID" value="ABC47505.1"/>
    <property type="molecule type" value="Genomic_DNA"/>
</dbReference>
<dbReference type="RefSeq" id="YP_008578461.1">
    <property type="nucleotide sequence ID" value="NC_022426.1"/>
</dbReference>
<dbReference type="SMR" id="Q1HV56"/>
<dbReference type="GeneID" id="17046745"/>
<dbReference type="CTD" id="4539"/>
<dbReference type="GO" id="GO:0005743">
    <property type="term" value="C:mitochondrial inner membrane"/>
    <property type="evidence" value="ECO:0000250"/>
    <property type="project" value="UniProtKB"/>
</dbReference>
<dbReference type="GO" id="GO:0045271">
    <property type="term" value="C:respiratory chain complex I"/>
    <property type="evidence" value="ECO:0000250"/>
    <property type="project" value="UniProtKB"/>
</dbReference>
<dbReference type="GO" id="GO:0008137">
    <property type="term" value="F:NADH dehydrogenase (ubiquinone) activity"/>
    <property type="evidence" value="ECO:0000250"/>
    <property type="project" value="UniProtKB"/>
</dbReference>
<dbReference type="GO" id="GO:0042773">
    <property type="term" value="P:ATP synthesis coupled electron transport"/>
    <property type="evidence" value="ECO:0007669"/>
    <property type="project" value="InterPro"/>
</dbReference>
<dbReference type="FunFam" id="1.10.287.3510:FF:000002">
    <property type="entry name" value="NADH-ubiquinone oxidoreductase chain 4L"/>
    <property type="match status" value="1"/>
</dbReference>
<dbReference type="Gene3D" id="1.10.287.3510">
    <property type="match status" value="1"/>
</dbReference>
<dbReference type="InterPro" id="IPR001133">
    <property type="entry name" value="NADH_UbQ_OxRdtase_chain4L/K"/>
</dbReference>
<dbReference type="InterPro" id="IPR039428">
    <property type="entry name" value="NUOK/Mnh_C1-like"/>
</dbReference>
<dbReference type="PANTHER" id="PTHR11434:SF0">
    <property type="entry name" value="NADH-UBIQUINONE OXIDOREDUCTASE CHAIN 4L"/>
    <property type="match status" value="1"/>
</dbReference>
<dbReference type="PANTHER" id="PTHR11434">
    <property type="entry name" value="NADH-UBIQUINONE OXIDOREDUCTASE SUBUNIT ND4L"/>
    <property type="match status" value="1"/>
</dbReference>
<dbReference type="Pfam" id="PF00420">
    <property type="entry name" value="Oxidored_q2"/>
    <property type="match status" value="1"/>
</dbReference>
<sequence length="98" mass="10882">MSLTYMNMFLAFTISLVGLLMYRSHMMSALLCLEGMMLSLFVMMTITILNIHLTLASMTPIILLVFAACEAALGLSLLVMVSTTYGMDYVQNLNLLQC</sequence>
<gene>
    <name type="primary">MT-ND4L</name>
    <name type="synonym">MTND4L</name>
    <name type="synonym">NADH4L</name>
    <name type="synonym">ND4L</name>
</gene>
<name>NU4LM_RHIPM</name>